<sequence>MAVEKLITDHIDIWSSALQTRSMAGRGSNGKIDLYGIKKLRELILELAVRGKLVPQDPNDEPASELLKRIAAEKTELVKQGKIKKQKPLLRISEDEKPFELPEGWEWITLSEIATINPKIEVTDDEQEISFVPMPCISTRFDGAHDQEIKKWGEVKKGYTHFADGDIALAKITPCFENSKAVIFKGLKGGVGVGTTELHVARPISSELNLQYILLNIKSPHYLSMGESMMTGSAGQKRVPRSFFENYPIPFPPNTEQARIVGTFSKLMFLCDQLEQQSLTSLDAHQQLVETLLATLTDSQNAEELAENWARISQYFDTLFTTEASIDALKQTILQLAVMGKLVSQDPNDEPASELLKRVEQEKVQLVKEGKIKKQKPLPPVSDDEKPFELPIGWEWCRIGEIIANMDAGWSPACSPEPSPNEDIWGVLKTTAVQSLEYREQENKTLPNSKLPRPQYEVHDGDILVTRAGPKNRVGVSCLVEKTRSKLMISDKIIRFHLISDDISAKYISLCLNRGVTADYLEASKSGMAESQMNISQENLRSAPIALPPTAIQLKVISTIEDFFKVCDQLKSRLQSAQQTQLHLADALTDAALN</sequence>
<comment type="function">
    <text evidence="1 2 3">The specificity (S) subunit of a type I restriction enzyme; this subunit dictates DNA sequence specificity. The M and S subunits together form a methyltransferase (MTase) that methylates two adenine residues of the sequence 5'-GAGN(7)ATGC-3'. In the presence of the R subunit the complex can also act as an endonuclease, binding to the same target sequence but cutting the DNA some distance from this site. Whether the DNA is cut or modified depends on the methylation state of the target sequence. When the target site is unmodified, the DNA is cut. When the target site is hemimethylated, the complex acts as a maintenance MTase modifying the DNA so that both strands become methylated (PubMed:12654995, PubMed:2642743). After locating a non-methylated recognition site, the enzyme complex serves as a molecular motor that translocates DNA in an ATP-dependent manner until a collision occurs that triggers cleavage (By similarity).</text>
</comment>
<comment type="subunit">
    <text evidence="1">The type I restriction/modification system is composed of three polypeptides R, M and S; the restriction enzyme has stoichiometry R(2)M(2)S(1) while the methyltransferase is M(2)S(1).</text>
</comment>
<comment type="domain">
    <text evidence="2">Contains two DNA recognition domains, each specifying recognition of one of the two defined components of the target sequence.</text>
</comment>
<comment type="miscellaneous">
    <text evidence="1">Type I restriction and modification enzymes are complex, multifunctional systems which require ATP, S-adenosyl methionine and Mg(2+) as cofactors and, in addition to their endonucleolytic and methylase activities, are potent DNA-dependent ATPases.</text>
</comment>
<comment type="similarity">
    <text evidence="5">Belongs to the type-I restriction system S methylase family.</text>
</comment>
<gene>
    <name evidence="4" type="primary">hsdS</name>
    <name type="synonym">hss</name>
</gene>
<protein>
    <recommendedName>
        <fullName evidence="4">Type I restriction enzyme EcoEI specificity subunit</fullName>
        <shortName evidence="4">S protein</shortName>
    </recommendedName>
    <alternativeName>
        <fullName evidence="3">Type I specificity subunit S.EcoEI</fullName>
        <shortName evidence="3">S.EcoEI</shortName>
    </alternativeName>
    <alternativeName>
        <fullName>Type-1 restriction enzyme EcoEI specificity subunit</fullName>
    </alternativeName>
</protein>
<evidence type="ECO:0000250" key="1">
    <source>
        <dbReference type="UniProtKB" id="P05719"/>
    </source>
</evidence>
<evidence type="ECO:0000269" key="2">
    <source>
    </source>
</evidence>
<evidence type="ECO:0000303" key="3">
    <source>
    </source>
</evidence>
<evidence type="ECO:0000303" key="4">
    <source>
    </source>
</evidence>
<evidence type="ECO:0000305" key="5"/>
<accession>P19705</accession>
<feature type="chain" id="PRO_0000198034" description="Type I restriction enzyme EcoEI specificity subunit">
    <location>
        <begin position="1"/>
        <end position="594"/>
    </location>
</feature>
<name>T1SE_ECOLX</name>
<proteinExistence type="inferred from homology"/>
<keyword id="KW-0238">DNA-binding</keyword>
<keyword id="KW-0680">Restriction system</keyword>
<reference key="1">
    <citation type="journal article" date="1989" name="Cell">
        <title>Conservation of complex DNA recognition domains between families of restriction enzymes.</title>
        <authorList>
            <person name="Cowan G.M."/>
            <person name="Gann A.A.F."/>
            <person name="Murray N.E."/>
        </authorList>
    </citation>
    <scope>NUCLEOTIDE SEQUENCE [GENOMIC DNA]</scope>
    <scope>FUNCTION</scope>
    <scope>RECOGNITION SITE</scope>
    <scope>DOMAIN</scope>
    <source>
        <strain>A58</strain>
    </source>
</reference>
<reference key="2">
    <citation type="journal article" date="2003" name="Nucleic Acids Res.">
        <title>A nomenclature for restriction enzymes, DNA methyltransferases, homing endonucleases and their genes.</title>
        <authorList>
            <person name="Roberts R.J."/>
            <person name="Belfort M."/>
            <person name="Bestor T."/>
            <person name="Bhagwat A.S."/>
            <person name="Bickle T.A."/>
            <person name="Bitinaite J."/>
            <person name="Blumenthal R.M."/>
            <person name="Degtyarev S.K."/>
            <person name="Dryden D.T."/>
            <person name="Dybvig K."/>
            <person name="Firman K."/>
            <person name="Gromova E.S."/>
            <person name="Gumport R.I."/>
            <person name="Halford S.E."/>
            <person name="Hattman S."/>
            <person name="Heitman J."/>
            <person name="Hornby D.P."/>
            <person name="Janulaitis A."/>
            <person name="Jeltsch A."/>
            <person name="Josephsen J."/>
            <person name="Kiss A."/>
            <person name="Klaenhammer T.R."/>
            <person name="Kobayashi I."/>
            <person name="Kong H."/>
            <person name="Krueger D.H."/>
            <person name="Lacks S."/>
            <person name="Marinus M.G."/>
            <person name="Miyahara M."/>
            <person name="Morgan R.D."/>
            <person name="Murray N.E."/>
            <person name="Nagaraja V."/>
            <person name="Piekarowicz A."/>
            <person name="Pingoud A."/>
            <person name="Raleigh E."/>
            <person name="Rao D.N."/>
            <person name="Reich N."/>
            <person name="Repin V.E."/>
            <person name="Selker E.U."/>
            <person name="Shaw P.C."/>
            <person name="Stein D.C."/>
            <person name="Stoddard B.L."/>
            <person name="Szybalski W."/>
            <person name="Trautner T.A."/>
            <person name="Van Etten J.L."/>
            <person name="Vitor J.M."/>
            <person name="Wilson G.G."/>
            <person name="Xu S.Y."/>
        </authorList>
    </citation>
    <scope>NOMENCLATURE</scope>
</reference>
<dbReference type="EMBL" id="J03162">
    <property type="protein sequence ID" value="AAA23986.1"/>
    <property type="molecule type" value="Genomic_DNA"/>
</dbReference>
<dbReference type="PIR" id="B32343">
    <property type="entry name" value="NDECES"/>
</dbReference>
<dbReference type="SMR" id="P19705"/>
<dbReference type="IntAct" id="P19705">
    <property type="interactions" value="11"/>
</dbReference>
<dbReference type="REBASE" id="3643">
    <property type="entry name" value="S.EcoEI"/>
</dbReference>
<dbReference type="PRO" id="PR:P19705"/>
<dbReference type="GO" id="GO:0003677">
    <property type="term" value="F:DNA binding"/>
    <property type="evidence" value="ECO:0007669"/>
    <property type="project" value="UniProtKB-KW"/>
</dbReference>
<dbReference type="GO" id="GO:0009307">
    <property type="term" value="P:DNA restriction-modification system"/>
    <property type="evidence" value="ECO:0007669"/>
    <property type="project" value="UniProtKB-KW"/>
</dbReference>
<dbReference type="CDD" id="cd17260">
    <property type="entry name" value="RMtype1_S_EcoEI-TRD1-CR1_like"/>
    <property type="match status" value="1"/>
</dbReference>
<dbReference type="CDD" id="cd17261">
    <property type="entry name" value="RMtype1_S_EcoKI-TRD2-CR2_like"/>
    <property type="match status" value="1"/>
</dbReference>
<dbReference type="Gene3D" id="3.90.220.20">
    <property type="entry name" value="DNA methylase specificity domains"/>
    <property type="match status" value="2"/>
</dbReference>
<dbReference type="InterPro" id="IPR000055">
    <property type="entry name" value="Restrct_endonuc_typeI_TRD"/>
</dbReference>
<dbReference type="InterPro" id="IPR044946">
    <property type="entry name" value="Restrct_endonuc_typeI_TRD_sf"/>
</dbReference>
<dbReference type="InterPro" id="IPR051212">
    <property type="entry name" value="Type-I_RE_S_subunit"/>
</dbReference>
<dbReference type="PANTHER" id="PTHR43140:SF1">
    <property type="entry name" value="TYPE I RESTRICTION ENZYME ECOKI SPECIFICITY SUBUNIT"/>
    <property type="match status" value="1"/>
</dbReference>
<dbReference type="PANTHER" id="PTHR43140">
    <property type="entry name" value="TYPE-1 RESTRICTION ENZYME ECOKI SPECIFICITY PROTEIN"/>
    <property type="match status" value="1"/>
</dbReference>
<dbReference type="Pfam" id="PF01420">
    <property type="entry name" value="Methylase_S"/>
    <property type="match status" value="2"/>
</dbReference>
<dbReference type="SUPFAM" id="SSF116734">
    <property type="entry name" value="DNA methylase specificity domain"/>
    <property type="match status" value="2"/>
</dbReference>
<organism>
    <name type="scientific">Escherichia coli</name>
    <dbReference type="NCBI Taxonomy" id="562"/>
    <lineage>
        <taxon>Bacteria</taxon>
        <taxon>Pseudomonadati</taxon>
        <taxon>Pseudomonadota</taxon>
        <taxon>Gammaproteobacteria</taxon>
        <taxon>Enterobacterales</taxon>
        <taxon>Enterobacteriaceae</taxon>
        <taxon>Escherichia</taxon>
    </lineage>
</organism>